<keyword id="KW-0963">Cytoplasm</keyword>
<keyword id="KW-0448">Lipopolysaccharide biosynthesis</keyword>
<keyword id="KW-0808">Transferase</keyword>
<reference key="1">
    <citation type="journal article" date="2010" name="J. Bacteriol.">
        <title>Whole genome sequences of two Xylella fastidiosa strains (M12 and M23) causing almond leaf scorch disease in California.</title>
        <authorList>
            <person name="Chen J."/>
            <person name="Xie G."/>
            <person name="Han S."/>
            <person name="Chertkov O."/>
            <person name="Sims D."/>
            <person name="Civerolo E.L."/>
        </authorList>
    </citation>
    <scope>NUCLEOTIDE SEQUENCE [LARGE SCALE GENOMIC DNA]</scope>
    <source>
        <strain>M12</strain>
    </source>
</reference>
<proteinExistence type="inferred from homology"/>
<evidence type="ECO:0000255" key="1">
    <source>
        <dbReference type="HAMAP-Rule" id="MF_00056"/>
    </source>
</evidence>
<feature type="chain" id="PRO_1000091845" description="2-dehydro-3-deoxyphosphooctonate aldolase">
    <location>
        <begin position="1"/>
        <end position="276"/>
    </location>
</feature>
<comment type="catalytic activity">
    <reaction evidence="1">
        <text>D-arabinose 5-phosphate + phosphoenolpyruvate + H2O = 3-deoxy-alpha-D-manno-2-octulosonate-8-phosphate + phosphate</text>
        <dbReference type="Rhea" id="RHEA:14053"/>
        <dbReference type="ChEBI" id="CHEBI:15377"/>
        <dbReference type="ChEBI" id="CHEBI:43474"/>
        <dbReference type="ChEBI" id="CHEBI:57693"/>
        <dbReference type="ChEBI" id="CHEBI:58702"/>
        <dbReference type="ChEBI" id="CHEBI:85985"/>
        <dbReference type="EC" id="2.5.1.55"/>
    </reaction>
</comment>
<comment type="pathway">
    <text evidence="1">Carbohydrate biosynthesis; 3-deoxy-D-manno-octulosonate biosynthesis; 3-deoxy-D-manno-octulosonate from D-ribulose 5-phosphate: step 2/3.</text>
</comment>
<comment type="pathway">
    <text evidence="1">Bacterial outer membrane biogenesis; lipopolysaccharide biosynthesis.</text>
</comment>
<comment type="subcellular location">
    <subcellularLocation>
        <location evidence="1">Cytoplasm</location>
    </subcellularLocation>
</comment>
<comment type="similarity">
    <text evidence="1">Belongs to the KdsA family.</text>
</comment>
<name>KDSA_XYLFM</name>
<protein>
    <recommendedName>
        <fullName evidence="1">2-dehydro-3-deoxyphosphooctonate aldolase</fullName>
        <ecNumber evidence="1">2.5.1.55</ecNumber>
    </recommendedName>
    <alternativeName>
        <fullName evidence="1">3-deoxy-D-manno-octulosonic acid 8-phosphate synthase</fullName>
    </alternativeName>
    <alternativeName>
        <fullName evidence="1">KDO-8-phosphate synthase</fullName>
        <shortName evidence="1">KDO 8-P synthase</shortName>
        <shortName evidence="1">KDOPS</shortName>
    </alternativeName>
    <alternativeName>
        <fullName evidence="1">Phospho-2-dehydro-3-deoxyoctonate aldolase</fullName>
    </alternativeName>
</protein>
<sequence length="276" mass="29697">MKLCGFEVGLNQPLFLIAGPCVIESLQLQLDTAGVLKEITSKLGLNFIFKSSFDKANRTSGSSFRGPGLEEGLKVLEAVKTQIGVPVLTDVHEYTPIDEVATVVDVLQTPAFLVRQTDFIRNVCAVGKPVNIKKGQFLSPWDMKPVVEKAKSTGNSQILVCERGASFGYNNLVSDMRSLAVMRETGCPVVFDATHSVQLPGAQGGRSGGQREFVPVLARAAVAVGISGLFAETHPDPPNALSDGPNAWPLRTMAMLLETLVELDAVTKKRGFLEQD</sequence>
<dbReference type="EC" id="2.5.1.55" evidence="1"/>
<dbReference type="EMBL" id="CP000941">
    <property type="protein sequence ID" value="ACA11619.1"/>
    <property type="molecule type" value="Genomic_DNA"/>
</dbReference>
<dbReference type="RefSeq" id="WP_004084011.1">
    <property type="nucleotide sequence ID" value="NC_010513.1"/>
</dbReference>
<dbReference type="SMR" id="B0U657"/>
<dbReference type="GeneID" id="93904253"/>
<dbReference type="KEGG" id="xfm:Xfasm12_0615"/>
<dbReference type="HOGENOM" id="CLU_036666_0_0_6"/>
<dbReference type="UniPathway" id="UPA00030"/>
<dbReference type="UniPathway" id="UPA00357">
    <property type="reaction ID" value="UER00474"/>
</dbReference>
<dbReference type="GO" id="GO:0005737">
    <property type="term" value="C:cytoplasm"/>
    <property type="evidence" value="ECO:0007669"/>
    <property type="project" value="UniProtKB-SubCell"/>
</dbReference>
<dbReference type="GO" id="GO:0008676">
    <property type="term" value="F:3-deoxy-8-phosphooctulonate synthase activity"/>
    <property type="evidence" value="ECO:0007669"/>
    <property type="project" value="UniProtKB-UniRule"/>
</dbReference>
<dbReference type="GO" id="GO:0019294">
    <property type="term" value="P:keto-3-deoxy-D-manno-octulosonic acid biosynthetic process"/>
    <property type="evidence" value="ECO:0007669"/>
    <property type="project" value="UniProtKB-UniRule"/>
</dbReference>
<dbReference type="Gene3D" id="3.20.20.70">
    <property type="entry name" value="Aldolase class I"/>
    <property type="match status" value="1"/>
</dbReference>
<dbReference type="HAMAP" id="MF_00056">
    <property type="entry name" value="KDO8P_synth"/>
    <property type="match status" value="1"/>
</dbReference>
<dbReference type="InterPro" id="IPR013785">
    <property type="entry name" value="Aldolase_TIM"/>
</dbReference>
<dbReference type="InterPro" id="IPR006218">
    <property type="entry name" value="DAHP1/KDSA"/>
</dbReference>
<dbReference type="InterPro" id="IPR006269">
    <property type="entry name" value="KDO8P_synthase"/>
</dbReference>
<dbReference type="NCBIfam" id="TIGR01362">
    <property type="entry name" value="KDO8P_synth"/>
    <property type="match status" value="1"/>
</dbReference>
<dbReference type="NCBIfam" id="NF003543">
    <property type="entry name" value="PRK05198.1"/>
    <property type="match status" value="1"/>
</dbReference>
<dbReference type="PANTHER" id="PTHR21057">
    <property type="entry name" value="PHOSPHO-2-DEHYDRO-3-DEOXYHEPTONATE ALDOLASE"/>
    <property type="match status" value="1"/>
</dbReference>
<dbReference type="Pfam" id="PF00793">
    <property type="entry name" value="DAHP_synth_1"/>
    <property type="match status" value="1"/>
</dbReference>
<dbReference type="SUPFAM" id="SSF51569">
    <property type="entry name" value="Aldolase"/>
    <property type="match status" value="1"/>
</dbReference>
<accession>B0U657</accession>
<gene>
    <name evidence="1" type="primary">kdsA</name>
    <name type="ordered locus">Xfasm12_0615</name>
</gene>
<organism>
    <name type="scientific">Xylella fastidiosa (strain M12)</name>
    <dbReference type="NCBI Taxonomy" id="405440"/>
    <lineage>
        <taxon>Bacteria</taxon>
        <taxon>Pseudomonadati</taxon>
        <taxon>Pseudomonadota</taxon>
        <taxon>Gammaproteobacteria</taxon>
        <taxon>Lysobacterales</taxon>
        <taxon>Lysobacteraceae</taxon>
        <taxon>Xylella</taxon>
    </lineage>
</organism>